<feature type="chain" id="PRO_1000119735" description="Chaperone protein DnaK">
    <location>
        <begin position="1"/>
        <end position="636"/>
    </location>
</feature>
<feature type="region of interest" description="Disordered" evidence="2">
    <location>
        <begin position="579"/>
        <end position="636"/>
    </location>
</feature>
<feature type="compositionally biased region" description="Low complexity" evidence="2">
    <location>
        <begin position="590"/>
        <end position="623"/>
    </location>
</feature>
<protein>
    <recommendedName>
        <fullName evidence="1">Chaperone protein DnaK</fullName>
    </recommendedName>
    <alternativeName>
        <fullName evidence="1">HSP70</fullName>
    </alternativeName>
    <alternativeName>
        <fullName evidence="1">Heat shock 70 kDa protein</fullName>
    </alternativeName>
    <alternativeName>
        <fullName evidence="1">Heat shock protein 70</fullName>
    </alternativeName>
</protein>
<proteinExistence type="inferred from homology"/>
<organism>
    <name type="scientific">Nitrosopumilus maritimus (strain SCM1)</name>
    <dbReference type="NCBI Taxonomy" id="436308"/>
    <lineage>
        <taxon>Archaea</taxon>
        <taxon>Nitrososphaerota</taxon>
        <taxon>Nitrososphaeria</taxon>
        <taxon>Nitrosopumilales</taxon>
        <taxon>Nitrosopumilaceae</taxon>
        <taxon>Nitrosopumilus</taxon>
    </lineage>
</organism>
<gene>
    <name evidence="1" type="primary">dnaK</name>
    <name type="ordered locus">Nmar_0096</name>
</gene>
<name>DNAK_NITMS</name>
<comment type="function">
    <text evidence="1">Acts as a chaperone.</text>
</comment>
<comment type="similarity">
    <text evidence="1">Belongs to the heat shock protein 70 family.</text>
</comment>
<keyword id="KW-0067">ATP-binding</keyword>
<keyword id="KW-0143">Chaperone</keyword>
<keyword id="KW-0547">Nucleotide-binding</keyword>
<keyword id="KW-1185">Reference proteome</keyword>
<accession>A9A135</accession>
<evidence type="ECO:0000255" key="1">
    <source>
        <dbReference type="HAMAP-Rule" id="MF_00332"/>
    </source>
</evidence>
<evidence type="ECO:0000256" key="2">
    <source>
        <dbReference type="SAM" id="MobiDB-lite"/>
    </source>
</evidence>
<sequence>MGKVIGIDLGTSNSAAAVMMGGKPTIIPAAEGQTAAGKAFPSVVAFSKEGELLVGEPARRQAVTNPDNTIIAAKRKMGSDYTFKIQDKEYKPQQISSFILQKIKKDAEAFVGETVEKAVITVPAYFDDNQRQATKDAGTIAGLDVVRIINEPTAASLAFGLDKAKEDMKILVFDFGGGTLDVTIMEMGGGVFEVMSTSGDTQLGGTDMDKVLIDYIVDEFKKKEGVDLSQDTTAMTRIREAAEKAKIELSTVMETDVNLPFIAHDPSSGAKNLELRLTRSKLDELIGPIVDRCKPSIQKALEDAKLSNSDINKIVMIGGPTRIPLVKKFVSEVIGKEVESGVDPMEAVAMGAAIQAGIIAGDVTSDIVLLDVTPLTLGIETLGGVREPLIERNTTIPTSKGKVFTTAADNQTAVTIHVVQGERPMATDNVSLGSFNLTDLPPAPRGVPQIEVKFDIDANGIINVTAKDLGTQKEAKITIETKTKLSEEEIEKLKEDAEKFSEEDKKKKEKIDLKNEAESYIYTTEKLVNHDLKDKISQEQGIKITDAVKEVKEVLDKEPEELKPKLEALQSIVNEVTTELYKNAAPPPGADGQQGADGQQGADGQQGADGQQGADGQQGADGQTTESSSNDETKTN</sequence>
<dbReference type="EMBL" id="CP000866">
    <property type="protein sequence ID" value="ABX11996.1"/>
    <property type="molecule type" value="Genomic_DNA"/>
</dbReference>
<dbReference type="RefSeq" id="WP_012214483.1">
    <property type="nucleotide sequence ID" value="NC_010085.1"/>
</dbReference>
<dbReference type="SMR" id="A9A135"/>
<dbReference type="STRING" id="436308.Nmar_0096"/>
<dbReference type="EnsemblBacteria" id="ABX11996">
    <property type="protein sequence ID" value="ABX11996"/>
    <property type="gene ID" value="Nmar_0096"/>
</dbReference>
<dbReference type="GeneID" id="5772990"/>
<dbReference type="KEGG" id="nmr:Nmar_0096"/>
<dbReference type="eggNOG" id="arCOG03060">
    <property type="taxonomic scope" value="Archaea"/>
</dbReference>
<dbReference type="HOGENOM" id="CLU_005965_2_4_2"/>
<dbReference type="InParanoid" id="A9A135"/>
<dbReference type="OrthoDB" id="9944at2157"/>
<dbReference type="PhylomeDB" id="A9A135"/>
<dbReference type="Proteomes" id="UP000000792">
    <property type="component" value="Chromosome"/>
</dbReference>
<dbReference type="GO" id="GO:0005524">
    <property type="term" value="F:ATP binding"/>
    <property type="evidence" value="ECO:0007669"/>
    <property type="project" value="UniProtKB-UniRule"/>
</dbReference>
<dbReference type="GO" id="GO:0016887">
    <property type="term" value="F:ATP hydrolysis activity"/>
    <property type="evidence" value="ECO:0000318"/>
    <property type="project" value="GO_Central"/>
</dbReference>
<dbReference type="GO" id="GO:0140662">
    <property type="term" value="F:ATP-dependent protein folding chaperone"/>
    <property type="evidence" value="ECO:0007669"/>
    <property type="project" value="InterPro"/>
</dbReference>
<dbReference type="GO" id="GO:0031072">
    <property type="term" value="F:heat shock protein binding"/>
    <property type="evidence" value="ECO:0000318"/>
    <property type="project" value="GO_Central"/>
</dbReference>
<dbReference type="GO" id="GO:0044183">
    <property type="term" value="F:protein folding chaperone"/>
    <property type="evidence" value="ECO:0000318"/>
    <property type="project" value="GO_Central"/>
</dbReference>
<dbReference type="GO" id="GO:0051082">
    <property type="term" value="F:unfolded protein binding"/>
    <property type="evidence" value="ECO:0007669"/>
    <property type="project" value="InterPro"/>
</dbReference>
<dbReference type="GO" id="GO:0051085">
    <property type="term" value="P:chaperone cofactor-dependent protein refolding"/>
    <property type="evidence" value="ECO:0000318"/>
    <property type="project" value="GO_Central"/>
</dbReference>
<dbReference type="GO" id="GO:0042026">
    <property type="term" value="P:protein refolding"/>
    <property type="evidence" value="ECO:0000318"/>
    <property type="project" value="GO_Central"/>
</dbReference>
<dbReference type="CDD" id="cd10234">
    <property type="entry name" value="ASKHA_NBD_HSP70_DnaK-like"/>
    <property type="match status" value="1"/>
</dbReference>
<dbReference type="FunFam" id="2.60.34.10:FF:000014">
    <property type="entry name" value="Chaperone protein DnaK HSP70"/>
    <property type="match status" value="1"/>
</dbReference>
<dbReference type="FunFam" id="3.30.420.40:FF:000071">
    <property type="entry name" value="Molecular chaperone DnaK"/>
    <property type="match status" value="1"/>
</dbReference>
<dbReference type="FunFam" id="3.90.640.10:FF:000003">
    <property type="entry name" value="Molecular chaperone DnaK"/>
    <property type="match status" value="1"/>
</dbReference>
<dbReference type="Gene3D" id="1.20.1270.10">
    <property type="match status" value="1"/>
</dbReference>
<dbReference type="Gene3D" id="3.30.420.40">
    <property type="match status" value="2"/>
</dbReference>
<dbReference type="Gene3D" id="3.90.640.10">
    <property type="entry name" value="Actin, Chain A, domain 4"/>
    <property type="match status" value="1"/>
</dbReference>
<dbReference type="Gene3D" id="2.60.34.10">
    <property type="entry name" value="Substrate Binding Domain Of DNAk, Chain A, domain 1"/>
    <property type="match status" value="1"/>
</dbReference>
<dbReference type="HAMAP" id="MF_00332">
    <property type="entry name" value="DnaK"/>
    <property type="match status" value="1"/>
</dbReference>
<dbReference type="InterPro" id="IPR043129">
    <property type="entry name" value="ATPase_NBD"/>
</dbReference>
<dbReference type="InterPro" id="IPR012725">
    <property type="entry name" value="Chaperone_DnaK"/>
</dbReference>
<dbReference type="InterPro" id="IPR018181">
    <property type="entry name" value="Heat_shock_70_CS"/>
</dbReference>
<dbReference type="InterPro" id="IPR029048">
    <property type="entry name" value="HSP70_C_sf"/>
</dbReference>
<dbReference type="InterPro" id="IPR029047">
    <property type="entry name" value="HSP70_peptide-bd_sf"/>
</dbReference>
<dbReference type="InterPro" id="IPR013126">
    <property type="entry name" value="Hsp_70_fam"/>
</dbReference>
<dbReference type="NCBIfam" id="NF001413">
    <property type="entry name" value="PRK00290.1"/>
    <property type="match status" value="1"/>
</dbReference>
<dbReference type="NCBIfam" id="TIGR02350">
    <property type="entry name" value="prok_dnaK"/>
    <property type="match status" value="1"/>
</dbReference>
<dbReference type="PANTHER" id="PTHR19375">
    <property type="entry name" value="HEAT SHOCK PROTEIN 70KDA"/>
    <property type="match status" value="1"/>
</dbReference>
<dbReference type="Pfam" id="PF00012">
    <property type="entry name" value="HSP70"/>
    <property type="match status" value="2"/>
</dbReference>
<dbReference type="PRINTS" id="PR00301">
    <property type="entry name" value="HEATSHOCK70"/>
</dbReference>
<dbReference type="SUPFAM" id="SSF53067">
    <property type="entry name" value="Actin-like ATPase domain"/>
    <property type="match status" value="2"/>
</dbReference>
<dbReference type="SUPFAM" id="SSF100934">
    <property type="entry name" value="Heat shock protein 70kD (HSP70), C-terminal subdomain"/>
    <property type="match status" value="1"/>
</dbReference>
<dbReference type="SUPFAM" id="SSF100920">
    <property type="entry name" value="Heat shock protein 70kD (HSP70), peptide-binding domain"/>
    <property type="match status" value="1"/>
</dbReference>
<dbReference type="PROSITE" id="PS00297">
    <property type="entry name" value="HSP70_1"/>
    <property type="match status" value="1"/>
</dbReference>
<dbReference type="PROSITE" id="PS00329">
    <property type="entry name" value="HSP70_2"/>
    <property type="match status" value="1"/>
</dbReference>
<dbReference type="PROSITE" id="PS01036">
    <property type="entry name" value="HSP70_3"/>
    <property type="match status" value="1"/>
</dbReference>
<reference key="1">
    <citation type="journal article" date="2010" name="Proc. Natl. Acad. Sci. U.S.A.">
        <title>Nitrosopumilus maritimus genome reveals unique mechanisms for nitrification and autotrophy in globally distributed marine crenarchaea.</title>
        <authorList>
            <person name="Walker C.B."/>
            <person name="de la Torre J.R."/>
            <person name="Klotz M.G."/>
            <person name="Urakawa H."/>
            <person name="Pinel N."/>
            <person name="Arp D.J."/>
            <person name="Brochier-Armanet C."/>
            <person name="Chain P.S."/>
            <person name="Chan P.P."/>
            <person name="Gollabgir A."/>
            <person name="Hemp J."/>
            <person name="Hugler M."/>
            <person name="Karr E.A."/>
            <person name="Konneke M."/>
            <person name="Shin M."/>
            <person name="Lawton T.J."/>
            <person name="Lowe T."/>
            <person name="Martens-Habbena W."/>
            <person name="Sayavedra-Soto L.A."/>
            <person name="Lang D."/>
            <person name="Sievert S.M."/>
            <person name="Rosenzweig A.C."/>
            <person name="Manning G."/>
            <person name="Stahl D.A."/>
        </authorList>
    </citation>
    <scope>NUCLEOTIDE SEQUENCE [LARGE SCALE GENOMIC DNA]</scope>
    <source>
        <strain>SCM1</strain>
    </source>
</reference>